<accession>P14666</accession>
<keyword id="KW-0027">Amidation</keyword>
<keyword id="KW-0044">Antibiotic</keyword>
<keyword id="KW-0929">Antimicrobial</keyword>
<keyword id="KW-0903">Direct protein sequencing</keyword>
<keyword id="KW-0391">Immunity</keyword>
<keyword id="KW-0399">Innate immunity</keyword>
<keyword id="KW-1185">Reference proteome</keyword>
<keyword id="KW-0964">Secreted</keyword>
<organism>
    <name type="scientific">Bombyx mori</name>
    <name type="common">Silk moth</name>
    <dbReference type="NCBI Taxonomy" id="7091"/>
    <lineage>
        <taxon>Eukaryota</taxon>
        <taxon>Metazoa</taxon>
        <taxon>Ecdysozoa</taxon>
        <taxon>Arthropoda</taxon>
        <taxon>Hexapoda</taxon>
        <taxon>Insecta</taxon>
        <taxon>Pterygota</taxon>
        <taxon>Neoptera</taxon>
        <taxon>Endopterygota</taxon>
        <taxon>Lepidoptera</taxon>
        <taxon>Glossata</taxon>
        <taxon>Ditrysia</taxon>
        <taxon>Bombycoidea</taxon>
        <taxon>Bombycidae</taxon>
        <taxon>Bombycinae</taxon>
        <taxon>Bombyx</taxon>
    </lineage>
</organism>
<name>CEC4_BOMMO</name>
<evidence type="ECO:0000269" key="1">
    <source>
    </source>
</evidence>
<evidence type="ECO:0000305" key="2"/>
<dbReference type="SMR" id="P14666"/>
<dbReference type="STRING" id="7091.P14666"/>
<dbReference type="InParanoid" id="P14666"/>
<dbReference type="Proteomes" id="UP000005204">
    <property type="component" value="Unassembled WGS sequence"/>
</dbReference>
<dbReference type="GO" id="GO:0005576">
    <property type="term" value="C:extracellular region"/>
    <property type="evidence" value="ECO:0007669"/>
    <property type="project" value="UniProtKB-SubCell"/>
</dbReference>
<dbReference type="GO" id="GO:0019731">
    <property type="term" value="P:antibacterial humoral response"/>
    <property type="evidence" value="ECO:0007669"/>
    <property type="project" value="InterPro"/>
</dbReference>
<dbReference type="GO" id="GO:0050830">
    <property type="term" value="P:defense response to Gram-positive bacterium"/>
    <property type="evidence" value="ECO:0007669"/>
    <property type="project" value="UniProtKB-ARBA"/>
</dbReference>
<dbReference type="GO" id="GO:0045087">
    <property type="term" value="P:innate immune response"/>
    <property type="evidence" value="ECO:0007669"/>
    <property type="project" value="UniProtKB-KW"/>
</dbReference>
<dbReference type="InterPro" id="IPR000875">
    <property type="entry name" value="Cecropin"/>
</dbReference>
<dbReference type="Pfam" id="PF00272">
    <property type="entry name" value="Cecropin"/>
    <property type="match status" value="1"/>
</dbReference>
<dbReference type="PROSITE" id="PS00268">
    <property type="entry name" value="CECROPIN"/>
    <property type="match status" value="1"/>
</dbReference>
<reference key="1">
    <citation type="journal article" date="1987" name="Annu. Rev. Microbiol.">
        <title>Cell-free immunity in insects.</title>
        <authorList>
            <person name="Boman H.G."/>
            <person name="Hultmark D."/>
        </authorList>
    </citation>
    <scope>PROTEIN SEQUENCE</scope>
    <scope>AMIDATION AT ILE-35</scope>
</reference>
<proteinExistence type="evidence at protein level"/>
<sequence length="35" mass="3763">RWKIFKKIEKVGQNIRDGIVKAGPAVAVVGQAATI</sequence>
<comment type="function">
    <text>Cecropins have lytic and antibacterial activity against several Gram-positive and Gram-negative bacteria.</text>
</comment>
<comment type="subcellular location">
    <subcellularLocation>
        <location>Secreted</location>
    </subcellularLocation>
</comment>
<comment type="similarity">
    <text evidence="2">Belongs to the cecropin family.</text>
</comment>
<protein>
    <recommendedName>
        <fullName>Cecropin</fullName>
    </recommendedName>
    <alternativeName>
        <fullName>Antibacterial peptide CM-IV</fullName>
    </alternativeName>
</protein>
<feature type="peptide" id="PRO_0000044679" description="Cecropin">
    <location>
        <begin position="1"/>
        <end position="35"/>
    </location>
</feature>
<feature type="modified residue" description="Isoleucine amide" evidence="1">
    <location>
        <position position="35"/>
    </location>
</feature>